<proteinExistence type="inferred from homology"/>
<protein>
    <recommendedName>
        <fullName evidence="1">Elongation factor 1-beta</fullName>
        <shortName evidence="1">EF-1-beta</shortName>
    </recommendedName>
    <alternativeName>
        <fullName evidence="1">aEF-1beta</fullName>
    </alternativeName>
</protein>
<sequence length="89" mass="9544">MGDVAAKIKIMPESIETDLAELKEKIKAVIPAKADLHGDIVEEPIAFGLKALIVTLIVNDEEGGTEPAEEAFAKVSGVENVQVLEAYRI</sequence>
<reference key="1">
    <citation type="journal article" date="2002" name="Genome Res.">
        <title>The genome of Methanosarcina acetivorans reveals extensive metabolic and physiological diversity.</title>
        <authorList>
            <person name="Galagan J.E."/>
            <person name="Nusbaum C."/>
            <person name="Roy A."/>
            <person name="Endrizzi M.G."/>
            <person name="Macdonald P."/>
            <person name="FitzHugh W."/>
            <person name="Calvo S."/>
            <person name="Engels R."/>
            <person name="Smirnov S."/>
            <person name="Atnoor D."/>
            <person name="Brown A."/>
            <person name="Allen N."/>
            <person name="Naylor J."/>
            <person name="Stange-Thomann N."/>
            <person name="DeArellano K."/>
            <person name="Johnson R."/>
            <person name="Linton L."/>
            <person name="McEwan P."/>
            <person name="McKernan K."/>
            <person name="Talamas J."/>
            <person name="Tirrell A."/>
            <person name="Ye W."/>
            <person name="Zimmer A."/>
            <person name="Barber R.D."/>
            <person name="Cann I."/>
            <person name="Graham D.E."/>
            <person name="Grahame D.A."/>
            <person name="Guss A.M."/>
            <person name="Hedderich R."/>
            <person name="Ingram-Smith C."/>
            <person name="Kuettner H.C."/>
            <person name="Krzycki J.A."/>
            <person name="Leigh J.A."/>
            <person name="Li W."/>
            <person name="Liu J."/>
            <person name="Mukhopadhyay B."/>
            <person name="Reeve J.N."/>
            <person name="Smith K."/>
            <person name="Springer T.A."/>
            <person name="Umayam L.A."/>
            <person name="White O."/>
            <person name="White R.H."/>
            <person name="de Macario E.C."/>
            <person name="Ferry J.G."/>
            <person name="Jarrell K.F."/>
            <person name="Jing H."/>
            <person name="Macario A.J.L."/>
            <person name="Paulsen I.T."/>
            <person name="Pritchett M."/>
            <person name="Sowers K.R."/>
            <person name="Swanson R.V."/>
            <person name="Zinder S.H."/>
            <person name="Lander E."/>
            <person name="Metcalf W.W."/>
            <person name="Birren B."/>
        </authorList>
    </citation>
    <scope>NUCLEOTIDE SEQUENCE [LARGE SCALE GENOMIC DNA]</scope>
    <source>
        <strain>ATCC 35395 / DSM 2834 / JCM 12185 / C2A</strain>
    </source>
</reference>
<gene>
    <name evidence="1" type="primary">ef1b</name>
    <name type="ordered locus">MA_1471</name>
</gene>
<evidence type="ECO:0000255" key="1">
    <source>
        <dbReference type="HAMAP-Rule" id="MF_00043"/>
    </source>
</evidence>
<organism>
    <name type="scientific">Methanosarcina acetivorans (strain ATCC 35395 / DSM 2834 / JCM 12185 / C2A)</name>
    <dbReference type="NCBI Taxonomy" id="188937"/>
    <lineage>
        <taxon>Archaea</taxon>
        <taxon>Methanobacteriati</taxon>
        <taxon>Methanobacteriota</taxon>
        <taxon>Stenosarchaea group</taxon>
        <taxon>Methanomicrobia</taxon>
        <taxon>Methanosarcinales</taxon>
        <taxon>Methanosarcinaceae</taxon>
        <taxon>Methanosarcina</taxon>
    </lineage>
</organism>
<dbReference type="EMBL" id="AE010299">
    <property type="protein sequence ID" value="AAM04885.1"/>
    <property type="molecule type" value="Genomic_DNA"/>
</dbReference>
<dbReference type="RefSeq" id="WP_011021485.1">
    <property type="nucleotide sequence ID" value="NC_003552.1"/>
</dbReference>
<dbReference type="SMR" id="Q8TQR9"/>
<dbReference type="FunCoup" id="Q8TQR9">
    <property type="interactions" value="5"/>
</dbReference>
<dbReference type="STRING" id="188937.MA_1471"/>
<dbReference type="EnsemblBacteria" id="AAM04885">
    <property type="protein sequence ID" value="AAM04885"/>
    <property type="gene ID" value="MA_1471"/>
</dbReference>
<dbReference type="GeneID" id="1473359"/>
<dbReference type="KEGG" id="mac:MA_1471"/>
<dbReference type="HOGENOM" id="CLU_165896_0_0_2"/>
<dbReference type="InParanoid" id="Q8TQR9"/>
<dbReference type="OrthoDB" id="84643at2157"/>
<dbReference type="PhylomeDB" id="Q8TQR9"/>
<dbReference type="Proteomes" id="UP000002487">
    <property type="component" value="Chromosome"/>
</dbReference>
<dbReference type="GO" id="GO:0003746">
    <property type="term" value="F:translation elongation factor activity"/>
    <property type="evidence" value="ECO:0007669"/>
    <property type="project" value="UniProtKB-UniRule"/>
</dbReference>
<dbReference type="CDD" id="cd00292">
    <property type="entry name" value="EF1B"/>
    <property type="match status" value="1"/>
</dbReference>
<dbReference type="Gene3D" id="3.30.70.60">
    <property type="match status" value="1"/>
</dbReference>
<dbReference type="HAMAP" id="MF_00043">
    <property type="entry name" value="EF1_beta"/>
    <property type="match status" value="1"/>
</dbReference>
<dbReference type="InterPro" id="IPR036219">
    <property type="entry name" value="eEF-1beta-like_sf"/>
</dbReference>
<dbReference type="InterPro" id="IPR014038">
    <property type="entry name" value="EF1B_bsu/dsu_GNE"/>
</dbReference>
<dbReference type="InterPro" id="IPR014717">
    <property type="entry name" value="Transl_elong_EF1B/ribsomal_bS6"/>
</dbReference>
<dbReference type="InterPro" id="IPR004542">
    <property type="entry name" value="Transl_elong_EF1B_B_arc"/>
</dbReference>
<dbReference type="NCBIfam" id="TIGR00489">
    <property type="entry name" value="aEF-1_beta"/>
    <property type="match status" value="1"/>
</dbReference>
<dbReference type="NCBIfam" id="NF001670">
    <property type="entry name" value="PRK00435.1"/>
    <property type="match status" value="1"/>
</dbReference>
<dbReference type="PANTHER" id="PTHR39647">
    <property type="entry name" value="ELONGATION FACTOR 1-BETA"/>
    <property type="match status" value="1"/>
</dbReference>
<dbReference type="PANTHER" id="PTHR39647:SF1">
    <property type="entry name" value="ELONGATION FACTOR 1-BETA"/>
    <property type="match status" value="1"/>
</dbReference>
<dbReference type="Pfam" id="PF00736">
    <property type="entry name" value="EF1_GNE"/>
    <property type="match status" value="1"/>
</dbReference>
<dbReference type="PIRSF" id="PIRSF006521">
    <property type="entry name" value="Transl_elong_EF1B_B_arc"/>
    <property type="match status" value="1"/>
</dbReference>
<dbReference type="SMART" id="SM00888">
    <property type="entry name" value="EF1_GNE"/>
    <property type="match status" value="1"/>
</dbReference>
<dbReference type="SUPFAM" id="SSF54984">
    <property type="entry name" value="eEF-1beta-like"/>
    <property type="match status" value="1"/>
</dbReference>
<comment type="function">
    <text evidence="1">Promotes the exchange of GDP for GTP in EF-1-alpha/GDP, thus allowing the regeneration of EF-1-alpha/GTP that could then be used to form the ternary complex EF-1-alpha/GTP/AAtRNA.</text>
</comment>
<comment type="similarity">
    <text evidence="1">Belongs to the EF-1-beta/EF-1-delta family.</text>
</comment>
<keyword id="KW-0251">Elongation factor</keyword>
<keyword id="KW-0648">Protein biosynthesis</keyword>
<keyword id="KW-1185">Reference proteome</keyword>
<name>EF1B_METAC</name>
<feature type="chain" id="PRO_0000155057" description="Elongation factor 1-beta">
    <location>
        <begin position="1"/>
        <end position="89"/>
    </location>
</feature>
<accession>Q8TQR9</accession>